<gene>
    <name evidence="1" type="primary">clpP</name>
    <name type="ordered locus">LAR_0379</name>
</gene>
<sequence length="197" mass="21434">MNLVPTVIEQSSRGERAYDIYSRLLKDRIIMLSGPIEDEMANSIVAQLLFLDAQDSTKDIYLYINSPGGVVTSGMAIYDTMNFIKADVQTIVIGMAASMASVLVSSGAKGKRFGLPHSQVLIHQPSGGAQGQQTEIEIAATEILKTRKMLNGILAKNSGQPIEKIQADTERDHYLTAQEAVDYGLLDGVMENNSKLK</sequence>
<feature type="chain" id="PRO_1000189652" description="ATP-dependent Clp protease proteolytic subunit">
    <location>
        <begin position="1"/>
        <end position="197"/>
    </location>
</feature>
<feature type="active site" description="Nucleophile" evidence="1">
    <location>
        <position position="98"/>
    </location>
</feature>
<feature type="active site" evidence="1">
    <location>
        <position position="123"/>
    </location>
</feature>
<reference key="1">
    <citation type="journal article" date="2008" name="DNA Res.">
        <title>Comparative genome analysis of Lactobacillus reuteri and Lactobacillus fermentum reveal a genomic island for reuterin and cobalamin production.</title>
        <authorList>
            <person name="Morita H."/>
            <person name="Toh H."/>
            <person name="Fukuda S."/>
            <person name="Horikawa H."/>
            <person name="Oshima K."/>
            <person name="Suzuki T."/>
            <person name="Murakami M."/>
            <person name="Hisamatsu S."/>
            <person name="Kato Y."/>
            <person name="Takizawa T."/>
            <person name="Fukuoka H."/>
            <person name="Yoshimura T."/>
            <person name="Itoh K."/>
            <person name="O'Sullivan D.J."/>
            <person name="McKay L.L."/>
            <person name="Ohno H."/>
            <person name="Kikuchi J."/>
            <person name="Masaoka T."/>
            <person name="Hattori M."/>
        </authorList>
    </citation>
    <scope>NUCLEOTIDE SEQUENCE [LARGE SCALE GENOMIC DNA]</scope>
    <source>
        <strain>JCM 1112</strain>
    </source>
</reference>
<comment type="function">
    <text evidence="1">Cleaves peptides in various proteins in a process that requires ATP hydrolysis. Has a chymotrypsin-like activity. Plays a major role in the degradation of misfolded proteins.</text>
</comment>
<comment type="catalytic activity">
    <reaction evidence="1">
        <text>Hydrolysis of proteins to small peptides in the presence of ATP and magnesium. alpha-casein is the usual test substrate. In the absence of ATP, only oligopeptides shorter than five residues are hydrolyzed (such as succinyl-Leu-Tyr-|-NHMec, and Leu-Tyr-Leu-|-Tyr-Trp, in which cleavage of the -Tyr-|-Leu- and -Tyr-|-Trp bonds also occurs).</text>
        <dbReference type="EC" id="3.4.21.92"/>
    </reaction>
</comment>
<comment type="subunit">
    <text evidence="1">Fourteen ClpP subunits assemble into 2 heptameric rings which stack back to back to give a disk-like structure with a central cavity, resembling the structure of eukaryotic proteasomes.</text>
</comment>
<comment type="subcellular location">
    <subcellularLocation>
        <location evidence="1">Cytoplasm</location>
    </subcellularLocation>
</comment>
<comment type="similarity">
    <text evidence="1">Belongs to the peptidase S14 family.</text>
</comment>
<protein>
    <recommendedName>
        <fullName evidence="1">ATP-dependent Clp protease proteolytic subunit</fullName>
        <ecNumber evidence="1">3.4.21.92</ecNumber>
    </recommendedName>
    <alternativeName>
        <fullName evidence="1">Endopeptidase Clp</fullName>
    </alternativeName>
</protein>
<keyword id="KW-0963">Cytoplasm</keyword>
<keyword id="KW-0378">Hydrolase</keyword>
<keyword id="KW-0645">Protease</keyword>
<keyword id="KW-0720">Serine protease</keyword>
<accession>B2G613</accession>
<proteinExistence type="inferred from homology"/>
<evidence type="ECO:0000255" key="1">
    <source>
        <dbReference type="HAMAP-Rule" id="MF_00444"/>
    </source>
</evidence>
<name>CLPP_LIMRJ</name>
<dbReference type="EC" id="3.4.21.92" evidence="1"/>
<dbReference type="EMBL" id="AP007281">
    <property type="protein sequence ID" value="BAG24895.1"/>
    <property type="molecule type" value="Genomic_DNA"/>
</dbReference>
<dbReference type="RefSeq" id="WP_003666435.1">
    <property type="nucleotide sequence ID" value="NC_010609.1"/>
</dbReference>
<dbReference type="SMR" id="B2G613"/>
<dbReference type="MEROPS" id="S14.001"/>
<dbReference type="GeneID" id="77192159"/>
<dbReference type="KEGG" id="lrf:LAR_0379"/>
<dbReference type="HOGENOM" id="CLU_058707_3_2_9"/>
<dbReference type="GO" id="GO:0005737">
    <property type="term" value="C:cytoplasm"/>
    <property type="evidence" value="ECO:0007669"/>
    <property type="project" value="UniProtKB-SubCell"/>
</dbReference>
<dbReference type="GO" id="GO:0009368">
    <property type="term" value="C:endopeptidase Clp complex"/>
    <property type="evidence" value="ECO:0007669"/>
    <property type="project" value="TreeGrafter"/>
</dbReference>
<dbReference type="GO" id="GO:0004176">
    <property type="term" value="F:ATP-dependent peptidase activity"/>
    <property type="evidence" value="ECO:0007669"/>
    <property type="project" value="InterPro"/>
</dbReference>
<dbReference type="GO" id="GO:0051117">
    <property type="term" value="F:ATPase binding"/>
    <property type="evidence" value="ECO:0007669"/>
    <property type="project" value="TreeGrafter"/>
</dbReference>
<dbReference type="GO" id="GO:0004252">
    <property type="term" value="F:serine-type endopeptidase activity"/>
    <property type="evidence" value="ECO:0007669"/>
    <property type="project" value="UniProtKB-UniRule"/>
</dbReference>
<dbReference type="GO" id="GO:0006515">
    <property type="term" value="P:protein quality control for misfolded or incompletely synthesized proteins"/>
    <property type="evidence" value="ECO:0007669"/>
    <property type="project" value="TreeGrafter"/>
</dbReference>
<dbReference type="CDD" id="cd07017">
    <property type="entry name" value="S14_ClpP_2"/>
    <property type="match status" value="1"/>
</dbReference>
<dbReference type="FunFam" id="3.90.226.10:FF:000001">
    <property type="entry name" value="ATP-dependent Clp protease proteolytic subunit"/>
    <property type="match status" value="1"/>
</dbReference>
<dbReference type="Gene3D" id="3.90.226.10">
    <property type="entry name" value="2-enoyl-CoA Hydratase, Chain A, domain 1"/>
    <property type="match status" value="1"/>
</dbReference>
<dbReference type="HAMAP" id="MF_00444">
    <property type="entry name" value="ClpP"/>
    <property type="match status" value="1"/>
</dbReference>
<dbReference type="InterPro" id="IPR001907">
    <property type="entry name" value="ClpP"/>
</dbReference>
<dbReference type="InterPro" id="IPR029045">
    <property type="entry name" value="ClpP/crotonase-like_dom_sf"/>
</dbReference>
<dbReference type="InterPro" id="IPR023562">
    <property type="entry name" value="ClpP/TepA"/>
</dbReference>
<dbReference type="InterPro" id="IPR033135">
    <property type="entry name" value="ClpP_His_AS"/>
</dbReference>
<dbReference type="InterPro" id="IPR018215">
    <property type="entry name" value="ClpP_Ser_AS"/>
</dbReference>
<dbReference type="NCBIfam" id="TIGR00493">
    <property type="entry name" value="clpP"/>
    <property type="match status" value="1"/>
</dbReference>
<dbReference type="NCBIfam" id="NF001368">
    <property type="entry name" value="PRK00277.1"/>
    <property type="match status" value="1"/>
</dbReference>
<dbReference type="NCBIfam" id="NF009205">
    <property type="entry name" value="PRK12553.1"/>
    <property type="match status" value="1"/>
</dbReference>
<dbReference type="PANTHER" id="PTHR10381">
    <property type="entry name" value="ATP-DEPENDENT CLP PROTEASE PROTEOLYTIC SUBUNIT"/>
    <property type="match status" value="1"/>
</dbReference>
<dbReference type="PANTHER" id="PTHR10381:SF70">
    <property type="entry name" value="ATP-DEPENDENT CLP PROTEASE PROTEOLYTIC SUBUNIT"/>
    <property type="match status" value="1"/>
</dbReference>
<dbReference type="Pfam" id="PF00574">
    <property type="entry name" value="CLP_protease"/>
    <property type="match status" value="1"/>
</dbReference>
<dbReference type="PRINTS" id="PR00127">
    <property type="entry name" value="CLPPROTEASEP"/>
</dbReference>
<dbReference type="SUPFAM" id="SSF52096">
    <property type="entry name" value="ClpP/crotonase"/>
    <property type="match status" value="1"/>
</dbReference>
<dbReference type="PROSITE" id="PS00382">
    <property type="entry name" value="CLP_PROTEASE_HIS"/>
    <property type="match status" value="1"/>
</dbReference>
<dbReference type="PROSITE" id="PS00381">
    <property type="entry name" value="CLP_PROTEASE_SER"/>
    <property type="match status" value="1"/>
</dbReference>
<organism>
    <name type="scientific">Limosilactobacillus reuteri subsp. reuteri (strain JCM 1112)</name>
    <name type="common">Lactobacillus reuteri</name>
    <dbReference type="NCBI Taxonomy" id="557433"/>
    <lineage>
        <taxon>Bacteria</taxon>
        <taxon>Bacillati</taxon>
        <taxon>Bacillota</taxon>
        <taxon>Bacilli</taxon>
        <taxon>Lactobacillales</taxon>
        <taxon>Lactobacillaceae</taxon>
        <taxon>Limosilactobacillus</taxon>
    </lineage>
</organism>